<reference key="1">
    <citation type="submission" date="2000-06" db="EMBL/GenBank/DDBJ databases">
        <title>The ascorbic acid degradation pathway of Klebsiella oxytoca M5a1.</title>
        <authorList>
            <person name="Dartois V.A."/>
            <person name="Menge K.L."/>
            <person name="Vande Weghe J."/>
        </authorList>
    </citation>
    <scope>NUCLEOTIDE SEQUENCE [GENOMIC DNA]</scope>
    <source>
        <strain>M5a1</strain>
    </source>
</reference>
<sequence length="332" mass="36705">MKVTFEQLKEAFNRVLLDACVARETADACAEMFARTTESGVYSHGVNRFPRFIQQLDNGDIIPEAQPQRVTTLGAIEQWDAQRSIGNLTAKKMMDRAIELASDHGIGLVALRNANHWMRGGSYGWQAAEKGYIGICWTNSIAVMAPWGAKECRIGTNPLIVAIPSTPITMVDMSMSMFSYGMLEVNRLAGRELPVDGGFDDDGRLTKEPGTIEKNRRILPMGYWKGSGLSIVLDMIATLLSNGSSVAEVTQENSDEYGVSQIFIAIEVDKLIDGATRDAKLQRIMDFITTAERADENVAVRLPGHEFTRLLDENRRNGITVDDSVWAKIQAL</sequence>
<comment type="function">
    <text evidence="1">Catalyzes the reduction of 2,3-diketo-L-gulonate in the presence of NADH, to form 3-keto-L-gulonate.</text>
</comment>
<comment type="catalytic activity">
    <reaction evidence="1">
        <text>3-dehydro-L-gulonate + NAD(+) = 2,3-dioxo-L-gulonate + NADH + H(+)</text>
        <dbReference type="Rhea" id="RHEA:21924"/>
        <dbReference type="ChEBI" id="CHEBI:15378"/>
        <dbReference type="ChEBI" id="CHEBI:57441"/>
        <dbReference type="ChEBI" id="CHEBI:57540"/>
        <dbReference type="ChEBI" id="CHEBI:57655"/>
        <dbReference type="ChEBI" id="CHEBI:57945"/>
        <dbReference type="EC" id="1.1.1.130"/>
    </reaction>
</comment>
<comment type="catalytic activity">
    <reaction evidence="1">
        <text>3-dehydro-L-gulonate + NADP(+) = 2,3-dioxo-L-gulonate + NADPH + H(+)</text>
        <dbReference type="Rhea" id="RHEA:21928"/>
        <dbReference type="ChEBI" id="CHEBI:15378"/>
        <dbReference type="ChEBI" id="CHEBI:57441"/>
        <dbReference type="ChEBI" id="CHEBI:57655"/>
        <dbReference type="ChEBI" id="CHEBI:57783"/>
        <dbReference type="ChEBI" id="CHEBI:58349"/>
        <dbReference type="EC" id="1.1.1.130"/>
    </reaction>
</comment>
<comment type="subunit">
    <text evidence="1">Homodimer.</text>
</comment>
<comment type="subcellular location">
    <subcellularLocation>
        <location evidence="1">Cytoplasm</location>
    </subcellularLocation>
</comment>
<comment type="similarity">
    <text evidence="1">Belongs to the LDH2/MDH2 oxidoreductase family. DlgD subfamily.</text>
</comment>
<protein>
    <recommendedName>
        <fullName evidence="1">2,3-diketo-L-gulonate reductase</fullName>
        <shortName evidence="1">2,3-DKG reductase</shortName>
        <ecNumber evidence="1">1.1.1.130</ecNumber>
    </recommendedName>
    <alternativeName>
        <fullName evidence="1">3-dehydro-L-gulonate 2-dehydrogenase</fullName>
    </alternativeName>
</protein>
<accession>Q93Q64</accession>
<feature type="chain" id="PRO_0000083833" description="2,3-diketo-L-gulonate reductase">
    <location>
        <begin position="1"/>
        <end position="332"/>
    </location>
</feature>
<feature type="active site" description="Proton donor" evidence="1">
    <location>
        <position position="44"/>
    </location>
</feature>
<feature type="binding site" evidence="1">
    <location>
        <begin position="168"/>
        <end position="174"/>
    </location>
    <ligand>
        <name>NAD(+)</name>
        <dbReference type="ChEBI" id="CHEBI:57540"/>
    </ligand>
</feature>
<feature type="binding site" evidence="1">
    <location>
        <begin position="224"/>
        <end position="225"/>
    </location>
    <ligand>
        <name>NAD(+)</name>
        <dbReference type="ChEBI" id="CHEBI:57540"/>
    </ligand>
</feature>
<feature type="binding site" evidence="1">
    <location>
        <begin position="304"/>
        <end position="306"/>
    </location>
    <ligand>
        <name>NAD(+)</name>
        <dbReference type="ChEBI" id="CHEBI:57540"/>
    </ligand>
</feature>
<organism>
    <name type="scientific">Klebsiella oxytoca</name>
    <dbReference type="NCBI Taxonomy" id="571"/>
    <lineage>
        <taxon>Bacteria</taxon>
        <taxon>Pseudomonadati</taxon>
        <taxon>Pseudomonadota</taxon>
        <taxon>Gammaproteobacteria</taxon>
        <taxon>Enterobacterales</taxon>
        <taxon>Enterobacteriaceae</taxon>
        <taxon>Klebsiella/Raoultella group</taxon>
        <taxon>Klebsiella</taxon>
    </lineage>
</organism>
<name>DLGD_KLEOX</name>
<proteinExistence type="inferred from homology"/>
<keyword id="KW-0963">Cytoplasm</keyword>
<keyword id="KW-0520">NAD</keyword>
<keyword id="KW-0560">Oxidoreductase</keyword>
<dbReference type="EC" id="1.1.1.130" evidence="1"/>
<dbReference type="EMBL" id="AF282849">
    <property type="protein sequence ID" value="AAK69521.1"/>
    <property type="molecule type" value="Genomic_DNA"/>
</dbReference>
<dbReference type="SMR" id="Q93Q64"/>
<dbReference type="STRING" id="571.AB185_08195"/>
<dbReference type="eggNOG" id="COG2055">
    <property type="taxonomic scope" value="Bacteria"/>
</dbReference>
<dbReference type="GO" id="GO:0005737">
    <property type="term" value="C:cytoplasm"/>
    <property type="evidence" value="ECO:0007669"/>
    <property type="project" value="UniProtKB-SubCell"/>
</dbReference>
<dbReference type="GO" id="GO:0047559">
    <property type="term" value="F:3-dehydro-L-gulonate 2-dehydrogenase activity"/>
    <property type="evidence" value="ECO:0007669"/>
    <property type="project" value="UniProtKB-UniRule"/>
</dbReference>
<dbReference type="GO" id="GO:0070403">
    <property type="term" value="F:NAD+ binding"/>
    <property type="evidence" value="ECO:0007669"/>
    <property type="project" value="InterPro"/>
</dbReference>
<dbReference type="Gene3D" id="1.10.1530.10">
    <property type="match status" value="1"/>
</dbReference>
<dbReference type="Gene3D" id="3.30.1370.60">
    <property type="entry name" value="Hypothetical oxidoreductase yiak, domain 2"/>
    <property type="match status" value="1"/>
</dbReference>
<dbReference type="Gene3D" id="3.30.60.50">
    <property type="entry name" value="Hypothetical oxidoreductase yiak, domain 3"/>
    <property type="match status" value="1"/>
</dbReference>
<dbReference type="HAMAP" id="MF_00820">
    <property type="entry name" value="Diketo_gul_reduc"/>
    <property type="match status" value="1"/>
</dbReference>
<dbReference type="InterPro" id="IPR023689">
    <property type="entry name" value="Diketo_gul_Rdtase"/>
</dbReference>
<dbReference type="InterPro" id="IPR043144">
    <property type="entry name" value="Mal/L-sulf/L-lact_DH-like_ah"/>
</dbReference>
<dbReference type="InterPro" id="IPR043143">
    <property type="entry name" value="Mal/L-sulf/L-lact_DH-like_NADP"/>
</dbReference>
<dbReference type="InterPro" id="IPR036111">
    <property type="entry name" value="Mal/L-sulfo/L-lacto_DH-like_sf"/>
</dbReference>
<dbReference type="InterPro" id="IPR003767">
    <property type="entry name" value="Malate/L-lactate_DH-like"/>
</dbReference>
<dbReference type="NCBIfam" id="NF009750">
    <property type="entry name" value="PRK13260.1"/>
    <property type="match status" value="1"/>
</dbReference>
<dbReference type="PANTHER" id="PTHR11091:SF3">
    <property type="entry name" value="2,3-DIKETO-L-GULONATE REDUCTASE"/>
    <property type="match status" value="1"/>
</dbReference>
<dbReference type="PANTHER" id="PTHR11091">
    <property type="entry name" value="OXIDOREDUCTASE-RELATED"/>
    <property type="match status" value="1"/>
</dbReference>
<dbReference type="Pfam" id="PF02615">
    <property type="entry name" value="Ldh_2"/>
    <property type="match status" value="1"/>
</dbReference>
<dbReference type="SUPFAM" id="SSF89733">
    <property type="entry name" value="L-sulfolactate dehydrogenase-like"/>
    <property type="match status" value="1"/>
</dbReference>
<evidence type="ECO:0000255" key="1">
    <source>
        <dbReference type="HAMAP-Rule" id="MF_00820"/>
    </source>
</evidence>
<gene>
    <name evidence="1" type="primary">dlgD</name>
</gene>